<feature type="chain" id="PRO_0000344918" description="Ribonuclease Y">
    <location>
        <begin position="1"/>
        <end position="520"/>
    </location>
</feature>
<feature type="transmembrane region" description="Helical" evidence="1">
    <location>
        <begin position="3"/>
        <end position="23"/>
    </location>
</feature>
<feature type="domain" description="KH" evidence="1">
    <location>
        <begin position="210"/>
        <end position="273"/>
    </location>
</feature>
<feature type="domain" description="HD" evidence="2">
    <location>
        <begin position="336"/>
        <end position="429"/>
    </location>
</feature>
<keyword id="KW-1003">Cell membrane</keyword>
<keyword id="KW-0255">Endonuclease</keyword>
<keyword id="KW-0378">Hydrolase</keyword>
<keyword id="KW-0472">Membrane</keyword>
<keyword id="KW-0540">Nuclease</keyword>
<keyword id="KW-1185">Reference proteome</keyword>
<keyword id="KW-0694">RNA-binding</keyword>
<keyword id="KW-0812">Transmembrane</keyword>
<keyword id="KW-1133">Transmembrane helix</keyword>
<proteinExistence type="inferred from homology"/>
<name>RNY_SYNC1</name>
<accession>Q3A218</accession>
<comment type="function">
    <text evidence="1">Endoribonuclease that initiates mRNA decay.</text>
</comment>
<comment type="subcellular location">
    <subcellularLocation>
        <location evidence="1">Cell membrane</location>
        <topology evidence="1">Single-pass membrane protein</topology>
    </subcellularLocation>
</comment>
<comment type="similarity">
    <text evidence="1">Belongs to the RNase Y family.</text>
</comment>
<sequence length="520" mass="57710">MSIEIQWIGIGAAFLVGAIGGALVRRKVAATQLAEAKRMADQILSEATKEADILRKEAEIQKKDALLEAKTAWEQEAREMRRELQAQEKRLVQREENLDRKVAQVDARDEEFGQREKRLSQQESRIRSWEKEADALVRQQRERLEELAGLGAEEAKAQLMEQMESEARHECAKKIKQIEDEAKEAADKKAQEILALAVQRYAGDFVAESAVSVVPLPNDEMKGRIIGREGRNIRAIEAATGIDLIIDDTPEAVIISGFNPVRREVARLALERLIGDGRIHPSRIEEAVNKATQDVDNAIREAGEQATFDVGVHGIHPEIIKLIGRLRYRTSYGQNVLQHSIEVAFLCGIMAAELGINVKQAKRAGLLHDIGKAVDHEVEGSHAVIGANLARKYGESAKIVHALAAHHEDEKPSTVLAVLVQAADALSGARPGARREMLETYVKRLQDLERIGTSFAGVTNCYAIQAGREIRVMVSSEEVSDVQSHTLAKQIARQIEEEMAYPGQIKINVIRETRAVEFAK</sequence>
<organism>
    <name type="scientific">Syntrophotalea carbinolica (strain DSM 2380 / NBRC 103641 / GraBd1)</name>
    <name type="common">Pelobacter carbinolicus</name>
    <dbReference type="NCBI Taxonomy" id="338963"/>
    <lineage>
        <taxon>Bacteria</taxon>
        <taxon>Pseudomonadati</taxon>
        <taxon>Thermodesulfobacteriota</taxon>
        <taxon>Desulfuromonadia</taxon>
        <taxon>Desulfuromonadales</taxon>
        <taxon>Syntrophotaleaceae</taxon>
        <taxon>Syntrophotalea</taxon>
    </lineage>
</organism>
<dbReference type="EC" id="3.1.-.-" evidence="1"/>
<dbReference type="EMBL" id="CP000142">
    <property type="protein sequence ID" value="ABA89589.1"/>
    <property type="molecule type" value="Genomic_DNA"/>
</dbReference>
<dbReference type="RefSeq" id="WP_011342111.1">
    <property type="nucleotide sequence ID" value="NC_007498.2"/>
</dbReference>
<dbReference type="SMR" id="Q3A218"/>
<dbReference type="STRING" id="338963.Pcar_2350"/>
<dbReference type="KEGG" id="pca:Pcar_2350"/>
<dbReference type="eggNOG" id="COG1418">
    <property type="taxonomic scope" value="Bacteria"/>
</dbReference>
<dbReference type="HOGENOM" id="CLU_028328_1_0_7"/>
<dbReference type="OrthoDB" id="9803205at2"/>
<dbReference type="Proteomes" id="UP000002534">
    <property type="component" value="Chromosome"/>
</dbReference>
<dbReference type="GO" id="GO:0005886">
    <property type="term" value="C:plasma membrane"/>
    <property type="evidence" value="ECO:0007669"/>
    <property type="project" value="UniProtKB-SubCell"/>
</dbReference>
<dbReference type="GO" id="GO:0003723">
    <property type="term" value="F:RNA binding"/>
    <property type="evidence" value="ECO:0007669"/>
    <property type="project" value="UniProtKB-UniRule"/>
</dbReference>
<dbReference type="GO" id="GO:0004521">
    <property type="term" value="F:RNA endonuclease activity"/>
    <property type="evidence" value="ECO:0007669"/>
    <property type="project" value="UniProtKB-UniRule"/>
</dbReference>
<dbReference type="GO" id="GO:0006402">
    <property type="term" value="P:mRNA catabolic process"/>
    <property type="evidence" value="ECO:0007669"/>
    <property type="project" value="UniProtKB-UniRule"/>
</dbReference>
<dbReference type="CDD" id="cd00077">
    <property type="entry name" value="HDc"/>
    <property type="match status" value="1"/>
</dbReference>
<dbReference type="CDD" id="cd22431">
    <property type="entry name" value="KH-I_RNaseY"/>
    <property type="match status" value="1"/>
</dbReference>
<dbReference type="FunFam" id="1.10.3210.10:FF:000022">
    <property type="entry name" value="Ribonuclease Y"/>
    <property type="match status" value="1"/>
</dbReference>
<dbReference type="Gene3D" id="1.10.3210.10">
    <property type="entry name" value="Hypothetical protein af1432"/>
    <property type="match status" value="1"/>
</dbReference>
<dbReference type="Gene3D" id="3.30.1370.10">
    <property type="entry name" value="K Homology domain, type 1"/>
    <property type="match status" value="1"/>
</dbReference>
<dbReference type="HAMAP" id="MF_00335">
    <property type="entry name" value="RNase_Y"/>
    <property type="match status" value="1"/>
</dbReference>
<dbReference type="InterPro" id="IPR003607">
    <property type="entry name" value="HD/PDEase_dom"/>
</dbReference>
<dbReference type="InterPro" id="IPR006674">
    <property type="entry name" value="HD_domain"/>
</dbReference>
<dbReference type="InterPro" id="IPR006675">
    <property type="entry name" value="HDIG_dom"/>
</dbReference>
<dbReference type="InterPro" id="IPR004087">
    <property type="entry name" value="KH_dom"/>
</dbReference>
<dbReference type="InterPro" id="IPR004088">
    <property type="entry name" value="KH_dom_type_1"/>
</dbReference>
<dbReference type="InterPro" id="IPR036612">
    <property type="entry name" value="KH_dom_type_1_sf"/>
</dbReference>
<dbReference type="InterPro" id="IPR017705">
    <property type="entry name" value="Ribonuclease_Y"/>
</dbReference>
<dbReference type="InterPro" id="IPR022711">
    <property type="entry name" value="RNase_Y_N"/>
</dbReference>
<dbReference type="NCBIfam" id="TIGR00277">
    <property type="entry name" value="HDIG"/>
    <property type="match status" value="1"/>
</dbReference>
<dbReference type="NCBIfam" id="TIGR03319">
    <property type="entry name" value="RNase_Y"/>
    <property type="match status" value="1"/>
</dbReference>
<dbReference type="PANTHER" id="PTHR12826">
    <property type="entry name" value="RIBONUCLEASE Y"/>
    <property type="match status" value="1"/>
</dbReference>
<dbReference type="PANTHER" id="PTHR12826:SF15">
    <property type="entry name" value="RIBONUCLEASE Y"/>
    <property type="match status" value="1"/>
</dbReference>
<dbReference type="Pfam" id="PF01966">
    <property type="entry name" value="HD"/>
    <property type="match status" value="1"/>
</dbReference>
<dbReference type="Pfam" id="PF00013">
    <property type="entry name" value="KH_1"/>
    <property type="match status" value="1"/>
</dbReference>
<dbReference type="Pfam" id="PF12072">
    <property type="entry name" value="RNase_Y_N"/>
    <property type="match status" value="1"/>
</dbReference>
<dbReference type="SMART" id="SM00471">
    <property type="entry name" value="HDc"/>
    <property type="match status" value="1"/>
</dbReference>
<dbReference type="SMART" id="SM00322">
    <property type="entry name" value="KH"/>
    <property type="match status" value="1"/>
</dbReference>
<dbReference type="SUPFAM" id="SSF54791">
    <property type="entry name" value="Eukaryotic type KH-domain (KH-domain type I)"/>
    <property type="match status" value="1"/>
</dbReference>
<dbReference type="SUPFAM" id="SSF109604">
    <property type="entry name" value="HD-domain/PDEase-like"/>
    <property type="match status" value="1"/>
</dbReference>
<dbReference type="PROSITE" id="PS51831">
    <property type="entry name" value="HD"/>
    <property type="match status" value="1"/>
</dbReference>
<dbReference type="PROSITE" id="PS50084">
    <property type="entry name" value="KH_TYPE_1"/>
    <property type="match status" value="1"/>
</dbReference>
<protein>
    <recommendedName>
        <fullName evidence="1">Ribonuclease Y</fullName>
        <shortName evidence="1">RNase Y</shortName>
        <ecNumber evidence="1">3.1.-.-</ecNumber>
    </recommendedName>
</protein>
<evidence type="ECO:0000255" key="1">
    <source>
        <dbReference type="HAMAP-Rule" id="MF_00335"/>
    </source>
</evidence>
<evidence type="ECO:0000255" key="2">
    <source>
        <dbReference type="PROSITE-ProRule" id="PRU01175"/>
    </source>
</evidence>
<reference key="1">
    <citation type="submission" date="2005-10" db="EMBL/GenBank/DDBJ databases">
        <title>Complete sequence of Pelobacter carbinolicus DSM 2380.</title>
        <authorList>
            <person name="Copeland A."/>
            <person name="Lucas S."/>
            <person name="Lapidus A."/>
            <person name="Barry K."/>
            <person name="Detter J.C."/>
            <person name="Glavina T."/>
            <person name="Hammon N."/>
            <person name="Israni S."/>
            <person name="Pitluck S."/>
            <person name="Chertkov O."/>
            <person name="Schmutz J."/>
            <person name="Larimer F."/>
            <person name="Land M."/>
            <person name="Kyrpides N."/>
            <person name="Ivanova N."/>
            <person name="Richardson P."/>
        </authorList>
    </citation>
    <scope>NUCLEOTIDE SEQUENCE [LARGE SCALE GENOMIC DNA]</scope>
    <source>
        <strain>DSM 2380 / NBRC 103641 / GraBd1</strain>
    </source>
</reference>
<gene>
    <name evidence="1" type="primary">rny</name>
    <name type="ordered locus">Pcar_2350</name>
</gene>